<proteinExistence type="evidence at protein level"/>
<name>FAR7_SARBU</name>
<feature type="peptide" id="PRO_0000371766" description="FMRFamide-7">
    <location>
        <begin position="1"/>
        <end position="8"/>
    </location>
</feature>
<feature type="modified residue" description="Phenylalanine amide" evidence="2">
    <location>
        <position position="8"/>
    </location>
</feature>
<organism>
    <name type="scientific">Sarcophaga bullata</name>
    <name type="common">Grey flesh fly</name>
    <name type="synonym">Neobellieria bullata</name>
    <dbReference type="NCBI Taxonomy" id="7385"/>
    <lineage>
        <taxon>Eukaryota</taxon>
        <taxon>Metazoa</taxon>
        <taxon>Ecdysozoa</taxon>
        <taxon>Arthropoda</taxon>
        <taxon>Hexapoda</taxon>
        <taxon>Insecta</taxon>
        <taxon>Pterygota</taxon>
        <taxon>Neoptera</taxon>
        <taxon>Endopterygota</taxon>
        <taxon>Diptera</taxon>
        <taxon>Brachycera</taxon>
        <taxon>Muscomorpha</taxon>
        <taxon>Oestroidea</taxon>
        <taxon>Sarcophagidae</taxon>
        <taxon>Sarcophaga</taxon>
        <taxon>Neobellieria</taxon>
    </lineage>
</organism>
<reference evidence="4" key="1">
    <citation type="journal article" date="2009" name="Gen. Comp. Endocrinol.">
        <title>Extended FMRFamides in dipteran insects: conservative expression in the neuroendocrine system is accompanied by rapid sequence evolution.</title>
        <authorList>
            <person name="Rahman M.M."/>
            <person name="Fromm B."/>
            <person name="Neupert S."/>
            <person name="Kreusch S."/>
            <person name="Predel R."/>
        </authorList>
    </citation>
    <scope>PROTEIN SEQUENCE</scope>
    <scope>MASS SPECTROMETRY</scope>
    <scope>AMIDATION AT PHE-8</scope>
    <source>
        <tissue evidence="2">Dorsal ganglionic sheath</tissue>
    </source>
</reference>
<accession>P85469</accession>
<keyword id="KW-0027">Amidation</keyword>
<keyword id="KW-0903">Direct protein sequencing</keyword>
<keyword id="KW-0527">Neuropeptide</keyword>
<keyword id="KW-0964">Secreted</keyword>
<protein>
    <recommendedName>
        <fullName>FMRFamide-7</fullName>
    </recommendedName>
    <alternativeName>
        <fullName evidence="3">SabFMRFamide-7</fullName>
    </alternativeName>
</protein>
<comment type="subcellular location">
    <subcellularLocation>
        <location evidence="4">Secreted</location>
    </subcellularLocation>
</comment>
<comment type="mass spectrometry" mass="972.43" method="MALDI" evidence="2"/>
<comment type="similarity">
    <text evidence="1">Belongs to the FARP (FMRFamide related peptide) family.</text>
</comment>
<dbReference type="GO" id="GO:0005576">
    <property type="term" value="C:extracellular region"/>
    <property type="evidence" value="ECO:0007669"/>
    <property type="project" value="UniProtKB-SubCell"/>
</dbReference>
<dbReference type="GO" id="GO:0007218">
    <property type="term" value="P:neuropeptide signaling pathway"/>
    <property type="evidence" value="ECO:0007669"/>
    <property type="project" value="UniProtKB-KW"/>
</dbReference>
<evidence type="ECO:0000255" key="1"/>
<evidence type="ECO:0000269" key="2">
    <source>
    </source>
</evidence>
<evidence type="ECO:0000303" key="3">
    <source>
    </source>
</evidence>
<evidence type="ECO:0000305" key="4"/>
<sequence length="8" mass="973">GSNDFMRF</sequence>